<name>NSRR_ECOLC</name>
<reference key="1">
    <citation type="submission" date="2008-02" db="EMBL/GenBank/DDBJ databases">
        <title>Complete sequence of Escherichia coli C str. ATCC 8739.</title>
        <authorList>
            <person name="Copeland A."/>
            <person name="Lucas S."/>
            <person name="Lapidus A."/>
            <person name="Glavina del Rio T."/>
            <person name="Dalin E."/>
            <person name="Tice H."/>
            <person name="Bruce D."/>
            <person name="Goodwin L."/>
            <person name="Pitluck S."/>
            <person name="Kiss H."/>
            <person name="Brettin T."/>
            <person name="Detter J.C."/>
            <person name="Han C."/>
            <person name="Kuske C.R."/>
            <person name="Schmutz J."/>
            <person name="Larimer F."/>
            <person name="Land M."/>
            <person name="Hauser L."/>
            <person name="Kyrpides N."/>
            <person name="Mikhailova N."/>
            <person name="Ingram L."/>
            <person name="Richardson P."/>
        </authorList>
    </citation>
    <scope>NUCLEOTIDE SEQUENCE [LARGE SCALE GENOMIC DNA]</scope>
    <source>
        <strain>ATCC 8739 / DSM 1576 / NBRC 3972 / NCIMB 8545 / WDCM 00012 / Crooks</strain>
    </source>
</reference>
<sequence length="141" mass="15583">MQLTSFTDYGLRALIYMASLPEGRMTSISEVTDVYGVSRNHMVKIINQLSRAGYVTAVRGKNGGIRLGKSASAIRIGDVVRELEPLSLVNCSSEFCHITPACRLKQALSKAVQSFLTELDNYTLADLVEENQPLYKLLLVE</sequence>
<organism>
    <name type="scientific">Escherichia coli (strain ATCC 8739 / DSM 1576 / NBRC 3972 / NCIMB 8545 / WDCM 00012 / Crooks)</name>
    <dbReference type="NCBI Taxonomy" id="481805"/>
    <lineage>
        <taxon>Bacteria</taxon>
        <taxon>Pseudomonadati</taxon>
        <taxon>Pseudomonadota</taxon>
        <taxon>Gammaproteobacteria</taxon>
        <taxon>Enterobacterales</taxon>
        <taxon>Enterobacteriaceae</taxon>
        <taxon>Escherichia</taxon>
    </lineage>
</organism>
<keyword id="KW-0001">2Fe-2S</keyword>
<keyword id="KW-0238">DNA-binding</keyword>
<keyword id="KW-0408">Iron</keyword>
<keyword id="KW-0411">Iron-sulfur</keyword>
<keyword id="KW-0479">Metal-binding</keyword>
<keyword id="KW-0678">Repressor</keyword>
<keyword id="KW-0804">Transcription</keyword>
<keyword id="KW-0805">Transcription regulation</keyword>
<proteinExistence type="inferred from homology"/>
<gene>
    <name evidence="1" type="primary">nsrR</name>
    <name type="ordered locus">EcolC_3835</name>
</gene>
<comment type="function">
    <text evidence="1">Nitric oxide-sensitive repressor of genes involved in protecting the cell against nitrosative stress. May require iron for activity.</text>
</comment>
<comment type="cofactor">
    <cofactor evidence="1">
        <name>[2Fe-2S] cluster</name>
        <dbReference type="ChEBI" id="CHEBI:190135"/>
    </cofactor>
    <text evidence="1">Binds 1 [2Fe-2S] cluster per subunit.</text>
</comment>
<dbReference type="EMBL" id="CP000946">
    <property type="protein sequence ID" value="ACA79439.1"/>
    <property type="molecule type" value="Genomic_DNA"/>
</dbReference>
<dbReference type="RefSeq" id="WP_001177644.1">
    <property type="nucleotide sequence ID" value="NZ_MTFT01000012.1"/>
</dbReference>
<dbReference type="SMR" id="B1IT28"/>
<dbReference type="GeneID" id="75202412"/>
<dbReference type="KEGG" id="ecl:EcolC_3835"/>
<dbReference type="HOGENOM" id="CLU_107144_2_1_6"/>
<dbReference type="GO" id="GO:0005829">
    <property type="term" value="C:cytosol"/>
    <property type="evidence" value="ECO:0007669"/>
    <property type="project" value="TreeGrafter"/>
</dbReference>
<dbReference type="GO" id="GO:0051537">
    <property type="term" value="F:2 iron, 2 sulfur cluster binding"/>
    <property type="evidence" value="ECO:0007669"/>
    <property type="project" value="UniProtKB-KW"/>
</dbReference>
<dbReference type="GO" id="GO:0003700">
    <property type="term" value="F:DNA-binding transcription factor activity"/>
    <property type="evidence" value="ECO:0007669"/>
    <property type="project" value="UniProtKB-UniRule"/>
</dbReference>
<dbReference type="GO" id="GO:0003690">
    <property type="term" value="F:double-stranded DNA binding"/>
    <property type="evidence" value="ECO:0007669"/>
    <property type="project" value="UniProtKB-UniRule"/>
</dbReference>
<dbReference type="GO" id="GO:0005506">
    <property type="term" value="F:iron ion binding"/>
    <property type="evidence" value="ECO:0007669"/>
    <property type="project" value="UniProtKB-UniRule"/>
</dbReference>
<dbReference type="GO" id="GO:0045892">
    <property type="term" value="P:negative regulation of DNA-templated transcription"/>
    <property type="evidence" value="ECO:0007669"/>
    <property type="project" value="InterPro"/>
</dbReference>
<dbReference type="FunFam" id="1.10.10.10:FF:000105">
    <property type="entry name" value="HTH-type transcriptional repressor NsrR"/>
    <property type="match status" value="1"/>
</dbReference>
<dbReference type="Gene3D" id="1.10.10.10">
    <property type="entry name" value="Winged helix-like DNA-binding domain superfamily/Winged helix DNA-binding domain"/>
    <property type="match status" value="1"/>
</dbReference>
<dbReference type="HAMAP" id="MF_01177">
    <property type="entry name" value="HTH_type_NsrR"/>
    <property type="match status" value="1"/>
</dbReference>
<dbReference type="InterPro" id="IPR030489">
    <property type="entry name" value="TR_Rrf2-type_CS"/>
</dbReference>
<dbReference type="InterPro" id="IPR000944">
    <property type="entry name" value="Tscrpt_reg_Rrf2"/>
</dbReference>
<dbReference type="InterPro" id="IPR023761">
    <property type="entry name" value="Tscrpt_rep_HTH_NsrR"/>
</dbReference>
<dbReference type="InterPro" id="IPR036388">
    <property type="entry name" value="WH-like_DNA-bd_sf"/>
</dbReference>
<dbReference type="InterPro" id="IPR036390">
    <property type="entry name" value="WH_DNA-bd_sf"/>
</dbReference>
<dbReference type="NCBIfam" id="NF008240">
    <property type="entry name" value="PRK11014.1"/>
    <property type="match status" value="1"/>
</dbReference>
<dbReference type="NCBIfam" id="TIGR00738">
    <property type="entry name" value="rrf2_super"/>
    <property type="match status" value="1"/>
</dbReference>
<dbReference type="PANTHER" id="PTHR33221:SF4">
    <property type="entry name" value="HTH-TYPE TRANSCRIPTIONAL REPRESSOR NSRR"/>
    <property type="match status" value="1"/>
</dbReference>
<dbReference type="PANTHER" id="PTHR33221">
    <property type="entry name" value="WINGED HELIX-TURN-HELIX TRANSCRIPTIONAL REGULATOR, RRF2 FAMILY"/>
    <property type="match status" value="1"/>
</dbReference>
<dbReference type="Pfam" id="PF02082">
    <property type="entry name" value="Rrf2"/>
    <property type="match status" value="1"/>
</dbReference>
<dbReference type="SUPFAM" id="SSF46785">
    <property type="entry name" value="Winged helix' DNA-binding domain"/>
    <property type="match status" value="1"/>
</dbReference>
<dbReference type="PROSITE" id="PS01332">
    <property type="entry name" value="HTH_RRF2_1"/>
    <property type="match status" value="1"/>
</dbReference>
<dbReference type="PROSITE" id="PS51197">
    <property type="entry name" value="HTH_RRF2_2"/>
    <property type="match status" value="1"/>
</dbReference>
<evidence type="ECO:0000255" key="1">
    <source>
        <dbReference type="HAMAP-Rule" id="MF_01177"/>
    </source>
</evidence>
<feature type="chain" id="PRO_1000085433" description="HTH-type transcriptional repressor NsrR">
    <location>
        <begin position="1"/>
        <end position="141"/>
    </location>
</feature>
<feature type="domain" description="HTH rrf2-type" evidence="1">
    <location>
        <begin position="2"/>
        <end position="129"/>
    </location>
</feature>
<feature type="DNA-binding region" description="H-T-H motif" evidence="1">
    <location>
        <begin position="28"/>
        <end position="51"/>
    </location>
</feature>
<feature type="binding site" evidence="1">
    <location>
        <position position="91"/>
    </location>
    <ligand>
        <name>[2Fe-2S] cluster</name>
        <dbReference type="ChEBI" id="CHEBI:190135"/>
    </ligand>
</feature>
<feature type="binding site" evidence="1">
    <location>
        <position position="96"/>
    </location>
    <ligand>
        <name>[2Fe-2S] cluster</name>
        <dbReference type="ChEBI" id="CHEBI:190135"/>
    </ligand>
</feature>
<feature type="binding site" evidence="1">
    <location>
        <position position="102"/>
    </location>
    <ligand>
        <name>[2Fe-2S] cluster</name>
        <dbReference type="ChEBI" id="CHEBI:190135"/>
    </ligand>
</feature>
<accession>B1IT28</accession>
<protein>
    <recommendedName>
        <fullName evidence="1">HTH-type transcriptional repressor NsrR</fullName>
    </recommendedName>
</protein>